<sequence length="532" mass="60070">MGKRVAIIGAGVSGLASIRSCLEEGLEPTCFERSEDIGGLWKFSEHAEEGRASIYQSVFTNSSKEMMCFPDFPYPDDFPNFMHNSKLQEYITVFSKEKNLLKYIQFKTLVCSVNKRPDFSVSGQWDITTERDGKRESATFDAVLICSGHHVYPNLPEESFPGLKLFKGKCFHSREYKEPGIFKGKRVLVIGLGNSGCDIATELSHTAEQVIISSRSGSWVMSRVWDDGYPWDMMFITRFETFLKNSLPTIISDWWYMKQMNARFKHENYGLMPLNGTLRKEPVFNDELPACILCGTVSIKPNVKAFTETSAIFEDGTVFEAIDCVIFATGYNYAYPFLDESIIKSKNNEITLFKGIFPPKLEKPTMAVIGFVQSLGATIPTTDLQARWAVQVIKGTCTLPSVTDMMNDIDKKREGKLKWFGTSETVQTDYISYMDELASFIGAKPNIPWLFLTDPKLAVEVFFGPCSPYQFRLVGPGKWPGARNAILTQWDRTLKPMKTRAVGNPQKPCMLCHLVKLFVLPVLFIAVFLALI</sequence>
<evidence type="ECO:0000250" key="1"/>
<evidence type="ECO:0000250" key="2">
    <source>
        <dbReference type="UniProtKB" id="P31513"/>
    </source>
</evidence>
<evidence type="ECO:0000250" key="3">
    <source>
        <dbReference type="UniProtKB" id="P97501"/>
    </source>
</evidence>
<evidence type="ECO:0000250" key="4">
    <source>
        <dbReference type="UniProtKB" id="Q9HFE4"/>
    </source>
</evidence>
<evidence type="ECO:0000255" key="5"/>
<evidence type="ECO:0000269" key="6">
    <source>
    </source>
</evidence>
<evidence type="ECO:0000305" key="7"/>
<evidence type="ECO:0000305" key="8">
    <source>
    </source>
</evidence>
<comment type="function">
    <text evidence="2">Essential hepatic enzyme that catalyzes the oxygenation of a wide variety of nitrogen- and sulfur-containing compounds including drugs as well as dietary compounds. Plays an important role in the metabolism of trimethylamine (TMA), via the production of trimethylamine N-oxide (TMAO) metabolite. TMA is generated by the action of gut microbiota using dietary precursors such as choline, choline containing compounds, betaine or L-carnitine. By regulating TMAO concentration, FMO3 directly impacts both platelet responsiveness and rate of thrombus formation.</text>
</comment>
<comment type="catalytic activity">
    <reaction evidence="2">
        <text>trimethylamine + NADPH + O2 = trimethylamine N-oxide + NADP(+) + H2O</text>
        <dbReference type="Rhea" id="RHEA:31979"/>
        <dbReference type="ChEBI" id="CHEBI:15377"/>
        <dbReference type="ChEBI" id="CHEBI:15379"/>
        <dbReference type="ChEBI" id="CHEBI:15724"/>
        <dbReference type="ChEBI" id="CHEBI:57783"/>
        <dbReference type="ChEBI" id="CHEBI:58349"/>
        <dbReference type="ChEBI" id="CHEBI:58389"/>
        <dbReference type="EC" id="1.14.13.148"/>
    </reaction>
    <physiologicalReaction direction="left-to-right" evidence="2">
        <dbReference type="Rhea" id="RHEA:31980"/>
    </physiologicalReaction>
</comment>
<comment type="catalytic activity">
    <reaction evidence="2">
        <text>N,N-dimethylaniline + NADPH + O2 + H(+) = N,N-dimethylaniline N-oxide + NADP(+) + H2O</text>
        <dbReference type="Rhea" id="RHEA:24468"/>
        <dbReference type="ChEBI" id="CHEBI:15377"/>
        <dbReference type="ChEBI" id="CHEBI:15378"/>
        <dbReference type="ChEBI" id="CHEBI:15379"/>
        <dbReference type="ChEBI" id="CHEBI:16269"/>
        <dbReference type="ChEBI" id="CHEBI:17735"/>
        <dbReference type="ChEBI" id="CHEBI:57783"/>
        <dbReference type="ChEBI" id="CHEBI:58349"/>
        <dbReference type="EC" id="1.14.13.8"/>
    </reaction>
    <physiologicalReaction direction="left-to-right" evidence="2">
        <dbReference type="Rhea" id="RHEA:24469"/>
    </physiologicalReaction>
</comment>
<comment type="catalytic activity">
    <reaction evidence="2">
        <text>hypotaurine + NADPH + O2 + H(+) = taurine + NADP(+) + H2O</text>
        <dbReference type="Rhea" id="RHEA:69819"/>
        <dbReference type="ChEBI" id="CHEBI:15377"/>
        <dbReference type="ChEBI" id="CHEBI:15378"/>
        <dbReference type="ChEBI" id="CHEBI:15379"/>
        <dbReference type="ChEBI" id="CHEBI:57783"/>
        <dbReference type="ChEBI" id="CHEBI:57853"/>
        <dbReference type="ChEBI" id="CHEBI:58349"/>
        <dbReference type="ChEBI" id="CHEBI:507393"/>
        <dbReference type="EC" id="1.14.13.8"/>
    </reaction>
    <physiologicalReaction direction="left-to-right" evidence="2">
        <dbReference type="Rhea" id="RHEA:69820"/>
    </physiologicalReaction>
</comment>
<comment type="catalytic activity">
    <reaction evidence="2">
        <text>(S)-nicotine + NADPH + O2 = trans-(S)-nicotine N(1')-oxide + NADP(+) + H2O</text>
        <dbReference type="Rhea" id="RHEA:58720"/>
        <dbReference type="ChEBI" id="CHEBI:15377"/>
        <dbReference type="ChEBI" id="CHEBI:15379"/>
        <dbReference type="ChEBI" id="CHEBI:57783"/>
        <dbReference type="ChEBI" id="CHEBI:58349"/>
        <dbReference type="ChEBI" id="CHEBI:59806"/>
        <dbReference type="ChEBI" id="CHEBI:142660"/>
    </reaction>
    <physiologicalReaction direction="left-to-right" evidence="2">
        <dbReference type="Rhea" id="RHEA:58721"/>
    </physiologicalReaction>
</comment>
<comment type="catalytic activity">
    <reaction evidence="2">
        <text>albendazole + NADPH + O2 + H(+) = albendazole S-oxide + NADP(+) + H2O</text>
        <dbReference type="Rhea" id="RHEA:10796"/>
        <dbReference type="ChEBI" id="CHEBI:15377"/>
        <dbReference type="ChEBI" id="CHEBI:15378"/>
        <dbReference type="ChEBI" id="CHEBI:15379"/>
        <dbReference type="ChEBI" id="CHEBI:16664"/>
        <dbReference type="ChEBI" id="CHEBI:16959"/>
        <dbReference type="ChEBI" id="CHEBI:57783"/>
        <dbReference type="ChEBI" id="CHEBI:58349"/>
        <dbReference type="EC" id="1.14.13.32"/>
    </reaction>
    <physiologicalReaction direction="left-to-right" evidence="2">
        <dbReference type="Rhea" id="RHEA:10797"/>
    </physiologicalReaction>
</comment>
<comment type="cofactor">
    <cofactor evidence="1">
        <name>FAD</name>
        <dbReference type="ChEBI" id="CHEBI:57692"/>
    </cofactor>
</comment>
<comment type="subcellular location">
    <subcellularLocation>
        <location evidence="6">Microsome membrane</location>
        <topology evidence="5">Single-pass membrane protein</topology>
    </subcellularLocation>
    <subcellularLocation>
        <location evidence="8">Endoplasmic reticulum membrane</location>
        <topology evidence="5">Single-pass membrane protein</topology>
    </subcellularLocation>
</comment>
<comment type="similarity">
    <text evidence="7">Belongs to the FMO family.</text>
</comment>
<proteinExistence type="evidence at transcript level"/>
<organism>
    <name type="scientific">Canis lupus familiaris</name>
    <name type="common">Dog</name>
    <name type="synonym">Canis familiaris</name>
    <dbReference type="NCBI Taxonomy" id="9615"/>
    <lineage>
        <taxon>Eukaryota</taxon>
        <taxon>Metazoa</taxon>
        <taxon>Chordata</taxon>
        <taxon>Craniata</taxon>
        <taxon>Vertebrata</taxon>
        <taxon>Euteleostomi</taxon>
        <taxon>Mammalia</taxon>
        <taxon>Eutheria</taxon>
        <taxon>Laurasiatheria</taxon>
        <taxon>Carnivora</taxon>
        <taxon>Caniformia</taxon>
        <taxon>Canidae</taxon>
        <taxon>Canis</taxon>
    </lineage>
</organism>
<dbReference type="EC" id="1.14.13.148" evidence="2"/>
<dbReference type="EC" id="1.14.13.32" evidence="2"/>
<dbReference type="EC" id="1.14.13.8" evidence="2"/>
<dbReference type="EMBL" id="AF384054">
    <property type="protein sequence ID" value="AAK97434.1"/>
    <property type="molecule type" value="mRNA"/>
</dbReference>
<dbReference type="RefSeq" id="NP_001003060.1">
    <property type="nucleotide sequence ID" value="NM_001003060.3"/>
</dbReference>
<dbReference type="SMR" id="Q95LA1"/>
<dbReference type="FunCoup" id="Q95LA1">
    <property type="interactions" value="19"/>
</dbReference>
<dbReference type="STRING" id="9615.ENSCAFP00000022069"/>
<dbReference type="PaxDb" id="9612-ENSCAFP00000041912"/>
<dbReference type="Ensembl" id="ENSCAFT00000023776.2">
    <property type="protein sequence ID" value="ENSCAFP00000022069.1"/>
    <property type="gene ID" value="ENSCAFG00000014992.5"/>
</dbReference>
<dbReference type="Ensembl" id="ENSCAFT00030000196.1">
    <property type="protein sequence ID" value="ENSCAFP00030000165.1"/>
    <property type="gene ID" value="ENSCAFG00030000129.1"/>
</dbReference>
<dbReference type="Ensembl" id="ENSCAFT00040000143.1">
    <property type="protein sequence ID" value="ENSCAFP00040000106.1"/>
    <property type="gene ID" value="ENSCAFG00040000102.1"/>
</dbReference>
<dbReference type="Ensembl" id="ENSCAFT00845002507.1">
    <property type="protein sequence ID" value="ENSCAFP00845001992.1"/>
    <property type="gene ID" value="ENSCAFG00845001467.1"/>
</dbReference>
<dbReference type="GeneID" id="403603"/>
<dbReference type="KEGG" id="cfa:403603"/>
<dbReference type="CTD" id="2328"/>
<dbReference type="VEuPathDB" id="HostDB:ENSCAFG00845001467"/>
<dbReference type="VGNC" id="VGNC:40918">
    <property type="gene designation" value="FMO3"/>
</dbReference>
<dbReference type="eggNOG" id="KOG1399">
    <property type="taxonomic scope" value="Eukaryota"/>
</dbReference>
<dbReference type="GeneTree" id="ENSGT00940000161339"/>
<dbReference type="HOGENOM" id="CLU_006909_8_2_1"/>
<dbReference type="InParanoid" id="Q95LA1"/>
<dbReference type="OMA" id="WFDLQYD"/>
<dbReference type="OrthoDB" id="66881at2759"/>
<dbReference type="TreeFam" id="TF105285"/>
<dbReference type="Reactome" id="R-CFA-217271">
    <property type="pathway name" value="FMO oxidises nucleophiles"/>
</dbReference>
<dbReference type="Proteomes" id="UP000002254">
    <property type="component" value="Chromosome 7"/>
</dbReference>
<dbReference type="Proteomes" id="UP000694429">
    <property type="component" value="Chromosome 7"/>
</dbReference>
<dbReference type="Proteomes" id="UP000694542">
    <property type="component" value="Chromosome 7"/>
</dbReference>
<dbReference type="Proteomes" id="UP000805418">
    <property type="component" value="Chromosome 7"/>
</dbReference>
<dbReference type="Bgee" id="ENSCAFG00000014992">
    <property type="expression patterns" value="Expressed in ovary and 44 other cell types or tissues"/>
</dbReference>
<dbReference type="GO" id="GO:0005789">
    <property type="term" value="C:endoplasmic reticulum membrane"/>
    <property type="evidence" value="ECO:0007669"/>
    <property type="project" value="UniProtKB-SubCell"/>
</dbReference>
<dbReference type="GO" id="GO:0047638">
    <property type="term" value="F:albendazole monooxygenase activity"/>
    <property type="evidence" value="ECO:0007669"/>
    <property type="project" value="RHEA"/>
</dbReference>
<dbReference type="GO" id="GO:0050660">
    <property type="term" value="F:flavin adenine dinucleotide binding"/>
    <property type="evidence" value="ECO:0007669"/>
    <property type="project" value="InterPro"/>
</dbReference>
<dbReference type="GO" id="GO:0047822">
    <property type="term" value="F:hypotaurine monooxygenase activity"/>
    <property type="evidence" value="ECO:0007669"/>
    <property type="project" value="Ensembl"/>
</dbReference>
<dbReference type="GO" id="GO:0004499">
    <property type="term" value="F:N,N-dimethylaniline monooxygenase activity"/>
    <property type="evidence" value="ECO:0000318"/>
    <property type="project" value="GO_Central"/>
</dbReference>
<dbReference type="GO" id="GO:0050661">
    <property type="term" value="F:NADP binding"/>
    <property type="evidence" value="ECO:0007669"/>
    <property type="project" value="InterPro"/>
</dbReference>
<dbReference type="GO" id="GO:0034899">
    <property type="term" value="F:trimethylamine monooxygenase activity"/>
    <property type="evidence" value="ECO:0007669"/>
    <property type="project" value="UniProtKB-EC"/>
</dbReference>
<dbReference type="GO" id="GO:0042412">
    <property type="term" value="P:taurine biosynthetic process"/>
    <property type="evidence" value="ECO:0007669"/>
    <property type="project" value="Ensembl"/>
</dbReference>
<dbReference type="FunFam" id="3.50.50.60:FF:000023">
    <property type="entry name" value="Dimethylaniline monooxygenase [N-oxide-forming]"/>
    <property type="match status" value="1"/>
</dbReference>
<dbReference type="FunFam" id="3.50.50.60:FF:000073">
    <property type="entry name" value="Dimethylaniline monooxygenase [N-oxide-forming]"/>
    <property type="match status" value="1"/>
</dbReference>
<dbReference type="FunFam" id="3.50.50.60:FF:000279">
    <property type="entry name" value="Dimethylaniline monooxygenase [N-oxide-forming]"/>
    <property type="match status" value="1"/>
</dbReference>
<dbReference type="FunFam" id="3.50.50.60:FF:000454">
    <property type="entry name" value="Dimethylaniline monooxygenase [N-oxide-forming]"/>
    <property type="match status" value="1"/>
</dbReference>
<dbReference type="Gene3D" id="3.50.50.60">
    <property type="entry name" value="FAD/NAD(P)-binding domain"/>
    <property type="match status" value="3"/>
</dbReference>
<dbReference type="InterPro" id="IPR036188">
    <property type="entry name" value="FAD/NAD-bd_sf"/>
</dbReference>
<dbReference type="InterPro" id="IPR000960">
    <property type="entry name" value="Flavin_mOase"/>
</dbReference>
<dbReference type="InterPro" id="IPR020946">
    <property type="entry name" value="Flavin_mOase-like"/>
</dbReference>
<dbReference type="InterPro" id="IPR002255">
    <property type="entry name" value="Flavin_mOase_3"/>
</dbReference>
<dbReference type="InterPro" id="IPR050346">
    <property type="entry name" value="FMO-like"/>
</dbReference>
<dbReference type="PANTHER" id="PTHR23023">
    <property type="entry name" value="DIMETHYLANILINE MONOOXYGENASE"/>
    <property type="match status" value="1"/>
</dbReference>
<dbReference type="Pfam" id="PF00743">
    <property type="entry name" value="FMO-like"/>
    <property type="match status" value="1"/>
</dbReference>
<dbReference type="PIRSF" id="PIRSF000332">
    <property type="entry name" value="FMO"/>
    <property type="match status" value="1"/>
</dbReference>
<dbReference type="PRINTS" id="PR00370">
    <property type="entry name" value="FMOXYGENASE"/>
</dbReference>
<dbReference type="PRINTS" id="PR01123">
    <property type="entry name" value="FMOXYGENASE3"/>
</dbReference>
<dbReference type="SUPFAM" id="SSF51905">
    <property type="entry name" value="FAD/NAD(P)-binding domain"/>
    <property type="match status" value="2"/>
</dbReference>
<gene>
    <name type="primary">FMO3</name>
</gene>
<reference key="1">
    <citation type="journal article" date="2002" name="Drug Metab. Dispos.">
        <title>Cloning, sequencing, and tissue-dependent expression of flavin-containing monooxygenase (FMO) 1 and FMO3 in the dog.</title>
        <authorList>
            <person name="Lattard V."/>
            <person name="Longin-Sauvageon C."/>
            <person name="Lachuer J."/>
            <person name="Delatour P."/>
            <person name="Benoit E."/>
        </authorList>
    </citation>
    <scope>NUCLEOTIDE SEQUENCE [MRNA]</scope>
    <scope>SUBCELLULAR LOCATION</scope>
    <source>
        <tissue>Liver</tissue>
    </source>
</reference>
<protein>
    <recommendedName>
        <fullName evidence="2">Flavin-containing monooxygenase 3</fullName>
        <ecNumber evidence="2">1.14.13.148</ecNumber>
        <ecNumber evidence="2">1.14.13.32</ecNumber>
        <ecNumber evidence="2">1.14.13.8</ecNumber>
    </recommendedName>
    <alternativeName>
        <fullName>Dimethylaniline monooxygenase [N-oxide-forming] 3</fullName>
    </alternativeName>
    <alternativeName>
        <fullName>Dimethylaniline oxidase 3</fullName>
    </alternativeName>
    <alternativeName>
        <fullName>Hepatic flavin-containing monooxygenase 3</fullName>
        <shortName>FMO 3</shortName>
    </alternativeName>
    <alternativeName>
        <fullName>Trimethylamine monooxygenase</fullName>
    </alternativeName>
</protein>
<name>FMO3_CANLF</name>
<feature type="chain" id="PRO_0000147653" description="Flavin-containing monooxygenase 3">
    <location>
        <begin position="1"/>
        <end position="532"/>
    </location>
</feature>
<feature type="transmembrane region" description="Helical" evidence="5">
    <location>
        <begin position="512"/>
        <end position="532"/>
    </location>
</feature>
<feature type="binding site" evidence="4">
    <location>
        <begin position="9"/>
        <end position="13"/>
    </location>
    <ligand>
        <name>FAD</name>
        <dbReference type="ChEBI" id="CHEBI:57692"/>
    </ligand>
</feature>
<feature type="binding site" evidence="4">
    <location>
        <position position="32"/>
    </location>
    <ligand>
        <name>FAD</name>
        <dbReference type="ChEBI" id="CHEBI:57692"/>
    </ligand>
</feature>
<feature type="binding site" evidence="4">
    <location>
        <begin position="40"/>
        <end position="41"/>
    </location>
    <ligand>
        <name>FAD</name>
        <dbReference type="ChEBI" id="CHEBI:57692"/>
    </ligand>
</feature>
<feature type="binding site" evidence="4">
    <location>
        <begin position="60"/>
        <end position="61"/>
    </location>
    <ligand>
        <name>NADP(+)</name>
        <dbReference type="ChEBI" id="CHEBI:58349"/>
    </ligand>
</feature>
<feature type="binding site" evidence="4">
    <location>
        <begin position="61"/>
        <end position="62"/>
    </location>
    <ligand>
        <name>FAD</name>
        <dbReference type="ChEBI" id="CHEBI:57692"/>
    </ligand>
</feature>
<feature type="binding site" evidence="4">
    <location>
        <begin position="195"/>
        <end position="198"/>
    </location>
    <ligand>
        <name>NADP(+)</name>
        <dbReference type="ChEBI" id="CHEBI:58349"/>
    </ligand>
</feature>
<feature type="modified residue" description="Phosphoserine" evidence="3">
    <location>
        <position position="401"/>
    </location>
</feature>
<accession>Q95LA1</accession>
<keyword id="KW-0256">Endoplasmic reticulum</keyword>
<keyword id="KW-0274">FAD</keyword>
<keyword id="KW-0285">Flavoprotein</keyword>
<keyword id="KW-0472">Membrane</keyword>
<keyword id="KW-0492">Microsome</keyword>
<keyword id="KW-0503">Monooxygenase</keyword>
<keyword id="KW-0521">NADP</keyword>
<keyword id="KW-0560">Oxidoreductase</keyword>
<keyword id="KW-0597">Phosphoprotein</keyword>
<keyword id="KW-1185">Reference proteome</keyword>
<keyword id="KW-0812">Transmembrane</keyword>
<keyword id="KW-1133">Transmembrane helix</keyword>